<protein>
    <recommendedName>
        <fullName evidence="1">Phosphoribosylaminoimidazole-succinocarboxamide synthase</fullName>
        <ecNumber evidence="1">6.3.2.6</ecNumber>
    </recommendedName>
    <alternativeName>
        <fullName evidence="1">SAICAR synthetase</fullName>
    </alternativeName>
</protein>
<sequence>MEKKELLYEGKAKKVYKTDKEDYYIIEYKDDATAFNGLKKGVIEEKGVVNNKVSSILFEFLEKRGIPTHYVKMLKDREMLVKKVTIFPLEVIIRNYAAGSICKRLGLQEGIKFKEPVLEFCYKNDELGDPMINEYHIRALELATRDEIDLIKERAFKVNEILSEYFLSKDIILVDFKLEFGKNQEGILLADEISPDTCRFWDKNTMEKLDKDRFRKDLGQVEEAYLEILRRVQQV</sequence>
<gene>
    <name evidence="1" type="primary">purC</name>
    <name type="ordered locus">TTE0588</name>
</gene>
<name>PUR7_CALS4</name>
<dbReference type="EC" id="6.3.2.6" evidence="1"/>
<dbReference type="EMBL" id="AE008691">
    <property type="protein sequence ID" value="AAM23859.1"/>
    <property type="status" value="ALT_INIT"/>
    <property type="molecule type" value="Genomic_DNA"/>
</dbReference>
<dbReference type="RefSeq" id="WP_011025004.1">
    <property type="nucleotide sequence ID" value="NZ_JANUCV010000001.1"/>
</dbReference>
<dbReference type="SMR" id="Q8RC58"/>
<dbReference type="STRING" id="273068.TTE0588"/>
<dbReference type="KEGG" id="tte:TTE0588"/>
<dbReference type="eggNOG" id="COG0152">
    <property type="taxonomic scope" value="Bacteria"/>
</dbReference>
<dbReference type="HOGENOM" id="CLU_061495_2_0_9"/>
<dbReference type="OrthoDB" id="9801549at2"/>
<dbReference type="UniPathway" id="UPA00074">
    <property type="reaction ID" value="UER00131"/>
</dbReference>
<dbReference type="Proteomes" id="UP000000555">
    <property type="component" value="Chromosome"/>
</dbReference>
<dbReference type="GO" id="GO:0005524">
    <property type="term" value="F:ATP binding"/>
    <property type="evidence" value="ECO:0007669"/>
    <property type="project" value="UniProtKB-KW"/>
</dbReference>
<dbReference type="GO" id="GO:0004639">
    <property type="term" value="F:phosphoribosylaminoimidazolesuccinocarboxamide synthase activity"/>
    <property type="evidence" value="ECO:0007669"/>
    <property type="project" value="UniProtKB-UniRule"/>
</dbReference>
<dbReference type="GO" id="GO:0006189">
    <property type="term" value="P:'de novo' IMP biosynthetic process"/>
    <property type="evidence" value="ECO:0007669"/>
    <property type="project" value="UniProtKB-UniRule"/>
</dbReference>
<dbReference type="GO" id="GO:0009236">
    <property type="term" value="P:cobalamin biosynthetic process"/>
    <property type="evidence" value="ECO:0007669"/>
    <property type="project" value="InterPro"/>
</dbReference>
<dbReference type="CDD" id="cd01415">
    <property type="entry name" value="SAICAR_synt_PurC"/>
    <property type="match status" value="1"/>
</dbReference>
<dbReference type="FunFam" id="3.30.200.20:FF:000086">
    <property type="entry name" value="Phosphoribosylaminoimidazole-succinocarboxamide synthase"/>
    <property type="match status" value="1"/>
</dbReference>
<dbReference type="FunFam" id="3.30.470.20:FF:000006">
    <property type="entry name" value="Phosphoribosylaminoimidazole-succinocarboxamide synthase"/>
    <property type="match status" value="1"/>
</dbReference>
<dbReference type="Gene3D" id="3.30.470.20">
    <property type="entry name" value="ATP-grasp fold, B domain"/>
    <property type="match status" value="1"/>
</dbReference>
<dbReference type="Gene3D" id="3.30.200.20">
    <property type="entry name" value="Phosphorylase Kinase, domain 1"/>
    <property type="match status" value="1"/>
</dbReference>
<dbReference type="HAMAP" id="MF_00137">
    <property type="entry name" value="SAICAR_synth"/>
    <property type="match status" value="1"/>
</dbReference>
<dbReference type="InterPro" id="IPR028923">
    <property type="entry name" value="SAICAR_synt/ADE2_N"/>
</dbReference>
<dbReference type="InterPro" id="IPR033934">
    <property type="entry name" value="SAICAR_synt_PurC"/>
</dbReference>
<dbReference type="InterPro" id="IPR001636">
    <property type="entry name" value="SAICAR_synth"/>
</dbReference>
<dbReference type="InterPro" id="IPR050089">
    <property type="entry name" value="SAICAR_synthetase"/>
</dbReference>
<dbReference type="InterPro" id="IPR018236">
    <property type="entry name" value="SAICAR_synthetase_CS"/>
</dbReference>
<dbReference type="NCBIfam" id="TIGR00081">
    <property type="entry name" value="purC"/>
    <property type="match status" value="1"/>
</dbReference>
<dbReference type="PANTHER" id="PTHR43599">
    <property type="entry name" value="MULTIFUNCTIONAL PROTEIN ADE2"/>
    <property type="match status" value="1"/>
</dbReference>
<dbReference type="PANTHER" id="PTHR43599:SF3">
    <property type="entry name" value="SI:DKEY-6E2.2"/>
    <property type="match status" value="1"/>
</dbReference>
<dbReference type="Pfam" id="PF01259">
    <property type="entry name" value="SAICAR_synt"/>
    <property type="match status" value="1"/>
</dbReference>
<dbReference type="SUPFAM" id="SSF56104">
    <property type="entry name" value="SAICAR synthase-like"/>
    <property type="match status" value="1"/>
</dbReference>
<dbReference type="PROSITE" id="PS01057">
    <property type="entry name" value="SAICAR_SYNTHETASE_1"/>
    <property type="match status" value="1"/>
</dbReference>
<dbReference type="PROSITE" id="PS01058">
    <property type="entry name" value="SAICAR_SYNTHETASE_2"/>
    <property type="match status" value="1"/>
</dbReference>
<reference key="1">
    <citation type="journal article" date="2002" name="Genome Res.">
        <title>A complete sequence of the T. tengcongensis genome.</title>
        <authorList>
            <person name="Bao Q."/>
            <person name="Tian Y."/>
            <person name="Li W."/>
            <person name="Xu Z."/>
            <person name="Xuan Z."/>
            <person name="Hu S."/>
            <person name="Dong W."/>
            <person name="Yang J."/>
            <person name="Chen Y."/>
            <person name="Xue Y."/>
            <person name="Xu Y."/>
            <person name="Lai X."/>
            <person name="Huang L."/>
            <person name="Dong X."/>
            <person name="Ma Y."/>
            <person name="Ling L."/>
            <person name="Tan H."/>
            <person name="Chen R."/>
            <person name="Wang J."/>
            <person name="Yu J."/>
            <person name="Yang H."/>
        </authorList>
    </citation>
    <scope>NUCLEOTIDE SEQUENCE [LARGE SCALE GENOMIC DNA]</scope>
    <source>
        <strain>DSM 15242 / JCM 11007 / NBRC 100824 / MB4</strain>
    </source>
</reference>
<feature type="chain" id="PRO_0000100892" description="Phosphoribosylaminoimidazole-succinocarboxamide synthase">
    <location>
        <begin position="1"/>
        <end position="235"/>
    </location>
</feature>
<accession>Q8RC58</accession>
<proteinExistence type="inferred from homology"/>
<evidence type="ECO:0000255" key="1">
    <source>
        <dbReference type="HAMAP-Rule" id="MF_00137"/>
    </source>
</evidence>
<evidence type="ECO:0000305" key="2"/>
<keyword id="KW-0067">ATP-binding</keyword>
<keyword id="KW-0436">Ligase</keyword>
<keyword id="KW-0547">Nucleotide-binding</keyword>
<keyword id="KW-0658">Purine biosynthesis</keyword>
<keyword id="KW-1185">Reference proteome</keyword>
<comment type="catalytic activity">
    <reaction evidence="1">
        <text>5-amino-1-(5-phospho-D-ribosyl)imidazole-4-carboxylate + L-aspartate + ATP = (2S)-2-[5-amino-1-(5-phospho-beta-D-ribosyl)imidazole-4-carboxamido]succinate + ADP + phosphate + 2 H(+)</text>
        <dbReference type="Rhea" id="RHEA:22628"/>
        <dbReference type="ChEBI" id="CHEBI:15378"/>
        <dbReference type="ChEBI" id="CHEBI:29991"/>
        <dbReference type="ChEBI" id="CHEBI:30616"/>
        <dbReference type="ChEBI" id="CHEBI:43474"/>
        <dbReference type="ChEBI" id="CHEBI:58443"/>
        <dbReference type="ChEBI" id="CHEBI:77657"/>
        <dbReference type="ChEBI" id="CHEBI:456216"/>
        <dbReference type="EC" id="6.3.2.6"/>
    </reaction>
</comment>
<comment type="pathway">
    <text evidence="1">Purine metabolism; IMP biosynthesis via de novo pathway; 5-amino-1-(5-phospho-D-ribosyl)imidazole-4-carboxamide from 5-amino-1-(5-phospho-D-ribosyl)imidazole-4-carboxylate: step 1/2.</text>
</comment>
<comment type="similarity">
    <text evidence="1">Belongs to the SAICAR synthetase family.</text>
</comment>
<comment type="sequence caution" evidence="2">
    <conflict type="erroneous initiation">
        <sequence resource="EMBL-CDS" id="AAM23859"/>
    </conflict>
</comment>
<organism>
    <name type="scientific">Caldanaerobacter subterraneus subsp. tengcongensis (strain DSM 15242 / JCM 11007 / NBRC 100824 / MB4)</name>
    <name type="common">Thermoanaerobacter tengcongensis</name>
    <dbReference type="NCBI Taxonomy" id="273068"/>
    <lineage>
        <taxon>Bacteria</taxon>
        <taxon>Bacillati</taxon>
        <taxon>Bacillota</taxon>
        <taxon>Clostridia</taxon>
        <taxon>Thermoanaerobacterales</taxon>
        <taxon>Thermoanaerobacteraceae</taxon>
        <taxon>Caldanaerobacter</taxon>
    </lineage>
</organism>